<gene>
    <name evidence="4" type="primary">S</name>
</gene>
<organismHost>
    <name type="scientific">Homo sapiens</name>
    <name type="common">Human</name>
    <dbReference type="NCBI Taxonomy" id="9606"/>
</organismHost>
<organismHost>
    <name type="scientific">Pan troglodytes</name>
    <name type="common">Chimpanzee</name>
    <dbReference type="NCBI Taxonomy" id="9598"/>
</organismHost>
<name>HBSAG_HBVB3</name>
<comment type="function">
    <text evidence="4">The large envelope protein exists in two topological conformations, one which is termed 'external' or Le-HBsAg and the other 'internal' or Li-HBsAg. In its external conformation the protein attaches the virus to cell receptors and thereby initiating infection. This interaction determines the species specificity and liver tropism. This attachment induces virion internalization predominantly through caveolin-mediated endocytosis. The large envelope protein also assures fusion between virion membrane and endosomal membrane. In its internal conformation the protein plays a role in virion morphogenesis and mediates the contact with the nucleocapsid like a matrix protein.</text>
</comment>
<comment type="function">
    <text evidence="4">The middle envelope protein plays an important role in the budding of the virion. It is involved in the induction of budding in a nucleocapsid independent way. In this process the majority of envelope proteins bud to form subviral lipoprotein particles of 22 nm of diameter that do not contain a nucleocapsid.</text>
</comment>
<comment type="subunit">
    <text evidence="3">Interacts (via its myristoylated pre-S1 region) with the host SLC10A1/NTCP; this interaction is essential for viral entry.</text>
</comment>
<comment type="subunit">
    <molecule>Isoform L</molecule>
    <text evidence="2">In its internal form (Li-HBsAg), interacts with the capsid protein and with the isoform S. Interacts with host chaperone CANX.</text>
</comment>
<comment type="subunit">
    <molecule>Isoform M</molecule>
    <text evidence="2">Associates with host chaperone CANX through its pre-S2 N glycan; this association may be essential for isoform M proper secretion.</text>
</comment>
<comment type="subunit">
    <molecule>Isoform S</molecule>
    <text evidence="2">Interacts with isoform L. Interacts with the antigens of satellite virus HDV (HDVAgs); this interaction is required for encapsidation of HDV genomic RNA.</text>
</comment>
<comment type="subcellular location">
    <subcellularLocation>
        <location evidence="4">Virion membrane</location>
    </subcellularLocation>
</comment>
<comment type="alternative products">
    <event type="alternative splicing"/>
    <event type="alternative initiation"/>
    <isoform>
        <id>Q9QAB7-1</id>
        <name>L</name>
        <name>Large envelope protein</name>
        <name>LHB</name>
        <name>L-HBsAg</name>
        <sequence type="displayed"/>
    </isoform>
    <isoform>
        <id>Q9QAB7-2</id>
        <name>M</name>
        <name>Middle envelope protein</name>
        <name>MHB</name>
        <name>M-HBsAg</name>
        <sequence type="described" ref="VSP_031372"/>
    </isoform>
    <isoform>
        <id>Q9QAB7-3</id>
        <name>S</name>
        <name>Small envelope protein</name>
        <name>SHB</name>
        <name>S-HBsAg</name>
        <sequence type="described" ref="VSP_031371"/>
    </isoform>
</comment>
<comment type="domain">
    <text evidence="4">The large envelope protein is synthesized with the pre-S region at the cytosolic side of the endoplasmic reticulum and, hence will be within the virion after budding. Therefore the pre-S region is not N-glycosylated. Later a post-translational translocation of N-terminal pre-S and TM1 domains occur in about 50% of proteins at the virion surface. These molecules change their topology by an unknown mechanism, resulting in exposure of pre-S region at virion surface. For isoform M in contrast, the pre-S2 region is translocated cotranslationally to the endoplasmic reticulum lumen and is N-glycosylated.</text>
</comment>
<comment type="PTM">
    <text evidence="1 4">Isoform M is N-terminally acetylated by host at a ratio of 90%, and N-glycosylated by host at the pre-S2 region.</text>
</comment>
<comment type="PTM">
    <text evidence="3 4">Myristoylated; this modification is essential for its interaction with the host protein SLC10A1/NTCP.</text>
</comment>
<comment type="biotechnology">
    <text>Systematic vaccination of individuals at risk of exposure to the virus has been the main method of controlling the morbidity and mortality associated with hepatitis B. The first hepatitis B vaccine was manufactured by the purification and inactivation of HBsAg obtained from the plasma of chronic hepatitis B virus carriers. The vaccine is now produced by recombinant DNA techniques and expression of the S isoform in yeast cells. The pre-S region do not seem to induce strong enough antigenic response.</text>
</comment>
<comment type="similarity">
    <text evidence="4">Belongs to the orthohepadnavirus major surface antigen family.</text>
</comment>
<keyword id="KW-0007">Acetylation</keyword>
<keyword id="KW-0024">Alternative initiation</keyword>
<keyword id="KW-0025">Alternative splicing</keyword>
<keyword id="KW-1166">Caveolin-mediated endocytosis of virus by host</keyword>
<keyword id="KW-1170">Fusion of virus membrane with host endosomal membrane</keyword>
<keyword id="KW-1168">Fusion of virus membrane with host membrane</keyword>
<keyword id="KW-0325">Glycoprotein</keyword>
<keyword id="KW-0945">Host-virus interaction</keyword>
<keyword id="KW-0449">Lipoprotein</keyword>
<keyword id="KW-0472">Membrane</keyword>
<keyword id="KW-0519">Myristate</keyword>
<keyword id="KW-0812">Transmembrane</keyword>
<keyword id="KW-1133">Transmembrane helix</keyword>
<keyword id="KW-1161">Viral attachment to host cell</keyword>
<keyword id="KW-0261">Viral envelope protein</keyword>
<keyword id="KW-1162">Viral penetration into host cytoplasm</keyword>
<keyword id="KW-0946">Virion</keyword>
<keyword id="KW-1164">Virus endocytosis by host</keyword>
<keyword id="KW-1160">Virus entry into host cell</keyword>
<sequence length="400" mass="43619">MGGWSSKPRKGMGTNLAVPNPLGFFPDHQLDPAFKANSDNPDWDLNPHKDNWPDANKVGVGAFGPGFTPPHGGLLGWSPQAQGLLTTVPAAPPPASTSRQSGRQPTPLSPPLRDTHPQAMQWNSTTFHQTLQDPRVRALYFPAGGSSSGTVSPAQNTVSAISSTLSKTGDPVPNMENISSGLLGPLLVLQAGFFLLTKILTIPQSLDSWWTSLNFLGQTPVCLGQNSQSQISSHSLTCCPPICPGYRWMCLRRFIIFLCILLLCLIFLLVLLDCQGMLPVCPLIPGSSTTSTGPCKTCTTPAQGTSMFPSCCCTKPTDGNCTCIPIPSSWAFAKFLWEWASVRFSWLSLLVPFVQWFVGLSPTVWLSVIWMMWFWGPSLCNILSPFMPLLPIFFCLWVYI</sequence>
<accession>Q9QAB7</accession>
<accession>Q9QAB6</accession>
<accession>Q9QAC1</accession>
<reference key="1">
    <citation type="journal article" date="2000" name="J. Gen. Virol.">
        <title>Long-term mutation rates in the hepatitis B virus genome.</title>
        <authorList>
            <person name="Hannoun C."/>
            <person name="Horal P."/>
            <person name="Lindh M."/>
        </authorList>
    </citation>
    <scope>NUCLEOTIDE SEQUENCE [GENOMIC DNA]</scope>
</reference>
<reference key="2">
    <citation type="journal article" date="1996" name="Intervirology">
        <title>Functions of the large hepatitis B virus surface protein in viral particle morphogenesis.</title>
        <authorList>
            <person name="Bruss V."/>
            <person name="Gerhardt E."/>
            <person name="Vieluf K."/>
            <person name="Wunderlich G."/>
        </authorList>
    </citation>
    <scope>REVIEW</scope>
</reference>
<reference key="3">
    <citation type="journal article" date="1998" name="Adv. Exp. Med. Biol.">
        <title>Role of glycan processing in hepatitis B virus envelope protein trafficking.</title>
        <authorList>
            <person name="Block T.M."/>
            <person name="Lu X."/>
            <person name="Mehta A."/>
            <person name="Park J."/>
            <person name="Blumberg B.S."/>
            <person name="Dwek R."/>
        </authorList>
    </citation>
    <scope>REVIEW</scope>
</reference>
<reference key="4">
    <citation type="journal article" date="2004" name="Virus Res.">
        <title>Envelopment of the hepatitis B virus nucleocapsid.</title>
        <authorList>
            <person name="Bruss V."/>
        </authorList>
    </citation>
    <scope>REVIEW</scope>
</reference>
<reference key="5">
    <citation type="journal article" date="2006" name="Cancer Sci.">
        <title>Hepatitis B virus pre-S mutants, endoplasmic reticulum stress and hepatocarcinogenesis.</title>
        <authorList>
            <person name="Wang H.C."/>
            <person name="Huang W."/>
            <person name="Lai M.D."/>
            <person name="Su I.J."/>
        </authorList>
    </citation>
    <scope>REVIEW</scope>
</reference>
<dbReference type="EMBL" id="AF121251">
    <property type="protein sequence ID" value="AAF24741.1"/>
    <property type="molecule type" value="Genomic_DNA"/>
</dbReference>
<dbReference type="EMBL" id="AF121251">
    <property type="protein sequence ID" value="AAF24742.1"/>
    <property type="molecule type" value="Genomic_DNA"/>
</dbReference>
<dbReference type="EMBL" id="AF121251">
    <property type="protein sequence ID" value="AAF24743.1"/>
    <property type="molecule type" value="Genomic_DNA"/>
</dbReference>
<dbReference type="PIR" id="JQ2059">
    <property type="entry name" value="JQ2059"/>
</dbReference>
<dbReference type="PIR" id="JQ2060">
    <property type="entry name" value="JQ2060"/>
</dbReference>
<dbReference type="SMR" id="Q9QAB7"/>
<dbReference type="GlyCosmos" id="Q9QAB7">
    <property type="glycosylation" value="2 sites, No reported glycans"/>
</dbReference>
<dbReference type="Proteomes" id="UP000007915">
    <property type="component" value="Genome"/>
</dbReference>
<dbReference type="GO" id="GO:0016020">
    <property type="term" value="C:membrane"/>
    <property type="evidence" value="ECO:0007669"/>
    <property type="project" value="UniProtKB-UniRule"/>
</dbReference>
<dbReference type="GO" id="GO:0019031">
    <property type="term" value="C:viral envelope"/>
    <property type="evidence" value="ECO:0007669"/>
    <property type="project" value="UniProtKB-KW"/>
</dbReference>
<dbReference type="GO" id="GO:0055036">
    <property type="term" value="C:virion membrane"/>
    <property type="evidence" value="ECO:0007669"/>
    <property type="project" value="UniProtKB-SubCell"/>
</dbReference>
<dbReference type="GO" id="GO:0075513">
    <property type="term" value="P:caveolin-mediated endocytosis of virus by host cell"/>
    <property type="evidence" value="ECO:0007669"/>
    <property type="project" value="UniProtKB-KW"/>
</dbReference>
<dbReference type="GO" id="GO:0039654">
    <property type="term" value="P:fusion of virus membrane with host endosome membrane"/>
    <property type="evidence" value="ECO:0007669"/>
    <property type="project" value="UniProtKB-KW"/>
</dbReference>
<dbReference type="GO" id="GO:0019062">
    <property type="term" value="P:virion attachment to host cell"/>
    <property type="evidence" value="ECO:0007669"/>
    <property type="project" value="UniProtKB-UniRule"/>
</dbReference>
<dbReference type="HAMAP" id="MF_04075">
    <property type="entry name" value="HBV_HBSAG"/>
    <property type="match status" value="1"/>
</dbReference>
<dbReference type="InterPro" id="IPR000349">
    <property type="entry name" value="HBV_HBSAG"/>
</dbReference>
<dbReference type="Pfam" id="PF00695">
    <property type="entry name" value="vMSA"/>
    <property type="match status" value="1"/>
</dbReference>
<protein>
    <recommendedName>
        <fullName evidence="4">Large envelope protein</fullName>
    </recommendedName>
    <alternativeName>
        <fullName evidence="4">L glycoprotein</fullName>
    </alternativeName>
    <alternativeName>
        <fullName evidence="4">L-HBsAg</fullName>
        <shortName evidence="4">LHB</shortName>
    </alternativeName>
    <alternativeName>
        <fullName evidence="4">Large S protein</fullName>
    </alternativeName>
    <alternativeName>
        <fullName evidence="4">Large surface protein</fullName>
    </alternativeName>
    <alternativeName>
        <fullName evidence="4">Major surface antigen</fullName>
    </alternativeName>
</protein>
<organism>
    <name type="scientific">Hepatitis B virus genotype B2 (isolate Vietnam/9873/1997)</name>
    <name type="common">HBV-B</name>
    <dbReference type="NCBI Taxonomy" id="489461"/>
    <lineage>
        <taxon>Viruses</taxon>
        <taxon>Riboviria</taxon>
        <taxon>Pararnavirae</taxon>
        <taxon>Artverviricota</taxon>
        <taxon>Revtraviricetes</taxon>
        <taxon>Blubervirales</taxon>
        <taxon>Hepadnaviridae</taxon>
        <taxon>Orthohepadnavirus</taxon>
        <taxon>Hepatitis B virus</taxon>
    </lineage>
</organism>
<feature type="initiator methionine" description="Removed; by host" evidence="4">
    <location>
        <position position="1"/>
    </location>
</feature>
<feature type="chain" id="PRO_0000319075" description="Large envelope protein" evidence="4">
    <location>
        <begin position="2"/>
        <end position="400"/>
    </location>
</feature>
<feature type="topological domain" description="Intravirion; in internal conformation" evidence="4">
    <location>
        <begin position="2"/>
        <end position="253"/>
    </location>
</feature>
<feature type="topological domain" description="Virion surface; in external conformation" evidence="4">
    <location>
        <begin position="2"/>
        <end position="181"/>
    </location>
</feature>
<feature type="transmembrane region" description="Helical; Name=TM1; Note=In external conformation" evidence="4">
    <location>
        <begin position="182"/>
        <end position="202"/>
    </location>
</feature>
<feature type="topological domain" description="Intravirion; in external conformation" evidence="4">
    <location>
        <begin position="203"/>
        <end position="253"/>
    </location>
</feature>
<feature type="transmembrane region" description="Helical; Name=TM2" evidence="4">
    <location>
        <begin position="254"/>
        <end position="274"/>
    </location>
</feature>
<feature type="topological domain" description="Virion surface" evidence="4">
    <location>
        <begin position="275"/>
        <end position="348"/>
    </location>
</feature>
<feature type="transmembrane region" description="Helical" evidence="4">
    <location>
        <begin position="349"/>
        <end position="369"/>
    </location>
</feature>
<feature type="topological domain" description="Intravirion" evidence="4">
    <location>
        <begin position="370"/>
        <end position="375"/>
    </location>
</feature>
<feature type="transmembrane region" description="Helical; Name=TM3" evidence="4">
    <location>
        <begin position="376"/>
        <end position="398"/>
    </location>
</feature>
<feature type="topological domain" description="Virion surface" evidence="4">
    <location>
        <begin position="399"/>
        <end position="400"/>
    </location>
</feature>
<feature type="region of interest" description="Pre-S" evidence="4">
    <location>
        <begin position="2"/>
        <end position="174"/>
    </location>
</feature>
<feature type="region of interest" description="Pre-S1" evidence="4">
    <location>
        <begin position="2"/>
        <end position="119"/>
    </location>
</feature>
<feature type="region of interest" description="Disordered" evidence="5">
    <location>
        <begin position="29"/>
        <end position="50"/>
    </location>
</feature>
<feature type="region of interest" description="Disordered" evidence="5">
    <location>
        <begin position="85"/>
        <end position="118"/>
    </location>
</feature>
<feature type="region of interest" description="Pre-S2" evidence="4">
    <location>
        <begin position="120"/>
        <end position="174"/>
    </location>
</feature>
<feature type="compositionally biased region" description="Polar residues" evidence="5">
    <location>
        <begin position="96"/>
        <end position="106"/>
    </location>
</feature>
<feature type="lipid moiety-binding region" description="N-myristoyl glycine; by host" evidence="4">
    <location>
        <position position="2"/>
    </location>
</feature>
<feature type="glycosylation site" description="N-linked (GlcNAc...) asparagine; by host" evidence="4">
    <location>
        <position position="320"/>
    </location>
</feature>
<feature type="splice variant" id="VSP_031371" description="In isoform S." evidence="6">
    <location>
        <begin position="1"/>
        <end position="174"/>
    </location>
</feature>
<feature type="splice variant" id="VSP_031372" description="In isoform M." evidence="6">
    <location>
        <begin position="1"/>
        <end position="119"/>
    </location>
</feature>
<feature type="modified residue" description="N-acetylmethionine" evidence="6">
    <location sequence="Q9QAB7-2">
        <position position="1"/>
    </location>
</feature>
<feature type="glycosylation site" description="N-linked (GlcNAc...) asparagine" evidence="6">
    <location sequence="Q9QAB7-2">
        <position position="4"/>
    </location>
</feature>
<proteinExistence type="evidence at protein level"/>
<evidence type="ECO:0000250" key="1">
    <source>
        <dbReference type="UniProtKB" id="P03138"/>
    </source>
</evidence>
<evidence type="ECO:0000250" key="2">
    <source>
        <dbReference type="UniProtKB" id="P03141"/>
    </source>
</evidence>
<evidence type="ECO:0000250" key="3">
    <source>
        <dbReference type="UniProtKB" id="Q9PWW3"/>
    </source>
</evidence>
<evidence type="ECO:0000255" key="4">
    <source>
        <dbReference type="HAMAP-Rule" id="MF_04075"/>
    </source>
</evidence>
<evidence type="ECO:0000256" key="5">
    <source>
        <dbReference type="SAM" id="MobiDB-lite"/>
    </source>
</evidence>
<evidence type="ECO:0000305" key="6"/>